<accession>O67611</accession>
<dbReference type="EMBL" id="AE000657">
    <property type="protein sequence ID" value="AAC07567.1"/>
    <property type="molecule type" value="Genomic_DNA"/>
</dbReference>
<dbReference type="PIR" id="A70448">
    <property type="entry name" value="A70448"/>
</dbReference>
<dbReference type="RefSeq" id="NP_214177.1">
    <property type="nucleotide sequence ID" value="NC_000918.1"/>
</dbReference>
<dbReference type="RefSeq" id="WP_010881114.1">
    <property type="nucleotide sequence ID" value="NC_000918.1"/>
</dbReference>
<dbReference type="PDB" id="2EHS">
    <property type="method" value="X-ray"/>
    <property type="resolution" value="1.30 A"/>
    <property type="chains" value="A=2-78"/>
</dbReference>
<dbReference type="PDB" id="2EHT">
    <property type="method" value="X-ray"/>
    <property type="resolution" value="1.40 A"/>
    <property type="chains" value="A=2-78"/>
</dbReference>
<dbReference type="PDBsum" id="2EHS"/>
<dbReference type="PDBsum" id="2EHT"/>
<dbReference type="SMR" id="O67611"/>
<dbReference type="FunCoup" id="O67611">
    <property type="interactions" value="465"/>
</dbReference>
<dbReference type="STRING" id="224324.aq_1717a"/>
<dbReference type="EnsemblBacteria" id="AAC07567">
    <property type="protein sequence ID" value="AAC07567"/>
    <property type="gene ID" value="aq_1717a"/>
</dbReference>
<dbReference type="KEGG" id="aae:aq_1717a"/>
<dbReference type="PATRIC" id="fig|224324.8.peg.1318"/>
<dbReference type="eggNOG" id="COG0236">
    <property type="taxonomic scope" value="Bacteria"/>
</dbReference>
<dbReference type="HOGENOM" id="CLU_108696_5_1_0"/>
<dbReference type="InParanoid" id="O67611"/>
<dbReference type="OrthoDB" id="9804551at2"/>
<dbReference type="UniPathway" id="UPA00094"/>
<dbReference type="EvolutionaryTrace" id="O67611"/>
<dbReference type="Proteomes" id="UP000000798">
    <property type="component" value="Chromosome"/>
</dbReference>
<dbReference type="GO" id="GO:0005829">
    <property type="term" value="C:cytosol"/>
    <property type="evidence" value="ECO:0000318"/>
    <property type="project" value="GO_Central"/>
</dbReference>
<dbReference type="GO" id="GO:0016020">
    <property type="term" value="C:membrane"/>
    <property type="evidence" value="ECO:0007669"/>
    <property type="project" value="GOC"/>
</dbReference>
<dbReference type="GO" id="GO:0000035">
    <property type="term" value="F:acyl binding"/>
    <property type="evidence" value="ECO:0000318"/>
    <property type="project" value="GO_Central"/>
</dbReference>
<dbReference type="GO" id="GO:0000036">
    <property type="term" value="F:acyl carrier activity"/>
    <property type="evidence" value="ECO:0000318"/>
    <property type="project" value="GO_Central"/>
</dbReference>
<dbReference type="GO" id="GO:0031177">
    <property type="term" value="F:phosphopantetheine binding"/>
    <property type="evidence" value="ECO:0007669"/>
    <property type="project" value="InterPro"/>
</dbReference>
<dbReference type="GO" id="GO:0009245">
    <property type="term" value="P:lipid A biosynthetic process"/>
    <property type="evidence" value="ECO:0000318"/>
    <property type="project" value="GO_Central"/>
</dbReference>
<dbReference type="FunFam" id="1.10.1200.10:FF:000001">
    <property type="entry name" value="Acyl carrier protein"/>
    <property type="match status" value="1"/>
</dbReference>
<dbReference type="Gene3D" id="1.10.1200.10">
    <property type="entry name" value="ACP-like"/>
    <property type="match status" value="1"/>
</dbReference>
<dbReference type="HAMAP" id="MF_01217">
    <property type="entry name" value="Acyl_carrier"/>
    <property type="match status" value="1"/>
</dbReference>
<dbReference type="InterPro" id="IPR003231">
    <property type="entry name" value="ACP"/>
</dbReference>
<dbReference type="InterPro" id="IPR036736">
    <property type="entry name" value="ACP-like_sf"/>
</dbReference>
<dbReference type="InterPro" id="IPR020806">
    <property type="entry name" value="PKS_PP-bd"/>
</dbReference>
<dbReference type="InterPro" id="IPR009081">
    <property type="entry name" value="PP-bd_ACP"/>
</dbReference>
<dbReference type="InterPro" id="IPR006162">
    <property type="entry name" value="Ppantetheine_attach_site"/>
</dbReference>
<dbReference type="NCBIfam" id="TIGR00517">
    <property type="entry name" value="acyl_carrier"/>
    <property type="match status" value="1"/>
</dbReference>
<dbReference type="NCBIfam" id="NF002148">
    <property type="entry name" value="PRK00982.1-2"/>
    <property type="match status" value="1"/>
</dbReference>
<dbReference type="NCBIfam" id="NF002149">
    <property type="entry name" value="PRK00982.1-3"/>
    <property type="match status" value="1"/>
</dbReference>
<dbReference type="NCBIfam" id="NF002150">
    <property type="entry name" value="PRK00982.1-4"/>
    <property type="match status" value="1"/>
</dbReference>
<dbReference type="NCBIfam" id="NF002151">
    <property type="entry name" value="PRK00982.1-5"/>
    <property type="match status" value="1"/>
</dbReference>
<dbReference type="NCBIfam" id="NF009104">
    <property type="entry name" value="PRK12449.1"/>
    <property type="match status" value="1"/>
</dbReference>
<dbReference type="PANTHER" id="PTHR20863">
    <property type="entry name" value="ACYL CARRIER PROTEIN"/>
    <property type="match status" value="1"/>
</dbReference>
<dbReference type="PANTHER" id="PTHR20863:SF76">
    <property type="entry name" value="CARRIER DOMAIN-CONTAINING PROTEIN"/>
    <property type="match status" value="1"/>
</dbReference>
<dbReference type="Pfam" id="PF00550">
    <property type="entry name" value="PP-binding"/>
    <property type="match status" value="1"/>
</dbReference>
<dbReference type="SMART" id="SM00823">
    <property type="entry name" value="PKS_PP"/>
    <property type="match status" value="1"/>
</dbReference>
<dbReference type="SUPFAM" id="SSF47336">
    <property type="entry name" value="ACP-like"/>
    <property type="match status" value="1"/>
</dbReference>
<dbReference type="PROSITE" id="PS50075">
    <property type="entry name" value="CARRIER"/>
    <property type="match status" value="1"/>
</dbReference>
<dbReference type="PROSITE" id="PS00012">
    <property type="entry name" value="PHOSPHOPANTETHEINE"/>
    <property type="match status" value="1"/>
</dbReference>
<evidence type="ECO:0000255" key="1">
    <source>
        <dbReference type="HAMAP-Rule" id="MF_01217"/>
    </source>
</evidence>
<evidence type="ECO:0000255" key="2">
    <source>
        <dbReference type="PROSITE-ProRule" id="PRU00258"/>
    </source>
</evidence>
<evidence type="ECO:0007829" key="3">
    <source>
        <dbReference type="PDB" id="2EHS"/>
    </source>
</evidence>
<feature type="chain" id="PRO_0000180094" description="Acyl carrier protein">
    <location>
        <begin position="1"/>
        <end position="78"/>
    </location>
</feature>
<feature type="domain" description="Carrier" evidence="2">
    <location>
        <begin position="1"/>
        <end position="76"/>
    </location>
</feature>
<feature type="modified residue" description="O-(pantetheine 4'-phosphoryl)serine" evidence="2">
    <location>
        <position position="36"/>
    </location>
</feature>
<feature type="helix" evidence="3">
    <location>
        <begin position="3"/>
        <end position="15"/>
    </location>
</feature>
<feature type="helix" evidence="3">
    <location>
        <begin position="19"/>
        <end position="21"/>
    </location>
</feature>
<feature type="turn" evidence="3">
    <location>
        <begin position="28"/>
        <end position="32"/>
    </location>
</feature>
<feature type="helix" evidence="3">
    <location>
        <begin position="36"/>
        <end position="50"/>
    </location>
</feature>
<feature type="helix" evidence="3">
    <location>
        <begin position="56"/>
        <end position="60"/>
    </location>
</feature>
<feature type="helix" evidence="3">
    <location>
        <begin position="65"/>
        <end position="75"/>
    </location>
</feature>
<gene>
    <name evidence="1" type="primary">acpP</name>
    <name type="ordered locus">aq_1716.1</name>
    <name type="ORF">aq_1717A</name>
</gene>
<sequence>MSLEERVKEIIAEQLGVEKEKITPEAKFVEDLGADSLDVVELIMAFEEEFGIEIPDEDAEKIQTVGDVINYLKEKVGG</sequence>
<comment type="function">
    <text evidence="1">Carrier of the growing fatty acid chain in fatty acid biosynthesis.</text>
</comment>
<comment type="pathway">
    <text evidence="1">Lipid metabolism; fatty acid biosynthesis.</text>
</comment>
<comment type="subcellular location">
    <subcellularLocation>
        <location evidence="1">Cytoplasm</location>
    </subcellularLocation>
</comment>
<comment type="PTM">
    <text evidence="1">4'-phosphopantetheine is transferred from CoA to a specific serine of apo-ACP by AcpS. This modification is essential for activity because fatty acids are bound in thioester linkage to the sulfhydryl of the prosthetic group.</text>
</comment>
<comment type="similarity">
    <text evidence="1">Belongs to the acyl carrier protein (ACP) family.</text>
</comment>
<proteinExistence type="evidence at protein level"/>
<keyword id="KW-0002">3D-structure</keyword>
<keyword id="KW-0963">Cytoplasm</keyword>
<keyword id="KW-0275">Fatty acid biosynthesis</keyword>
<keyword id="KW-0276">Fatty acid metabolism</keyword>
<keyword id="KW-0444">Lipid biosynthesis</keyword>
<keyword id="KW-0443">Lipid metabolism</keyword>
<keyword id="KW-0596">Phosphopantetheine</keyword>
<keyword id="KW-0597">Phosphoprotein</keyword>
<keyword id="KW-1185">Reference proteome</keyword>
<organism>
    <name type="scientific">Aquifex aeolicus (strain VF5)</name>
    <dbReference type="NCBI Taxonomy" id="224324"/>
    <lineage>
        <taxon>Bacteria</taxon>
        <taxon>Pseudomonadati</taxon>
        <taxon>Aquificota</taxon>
        <taxon>Aquificia</taxon>
        <taxon>Aquificales</taxon>
        <taxon>Aquificaceae</taxon>
        <taxon>Aquifex</taxon>
    </lineage>
</organism>
<reference key="1">
    <citation type="journal article" date="1998" name="Nature">
        <title>The complete genome of the hyperthermophilic bacterium Aquifex aeolicus.</title>
        <authorList>
            <person name="Deckert G."/>
            <person name="Warren P.V."/>
            <person name="Gaasterland T."/>
            <person name="Young W.G."/>
            <person name="Lenox A.L."/>
            <person name="Graham D.E."/>
            <person name="Overbeek R."/>
            <person name="Snead M.A."/>
            <person name="Keller M."/>
            <person name="Aujay M."/>
            <person name="Huber R."/>
            <person name="Feldman R.A."/>
            <person name="Short J.M."/>
            <person name="Olsen G.J."/>
            <person name="Swanson R.V."/>
        </authorList>
    </citation>
    <scope>NUCLEOTIDE SEQUENCE [LARGE SCALE GENOMIC DNA]</scope>
    <source>
        <strain>VF5</strain>
    </source>
</reference>
<name>ACP_AQUAE</name>
<protein>
    <recommendedName>
        <fullName evidence="1">Acyl carrier protein</fullName>
        <shortName evidence="1">ACP</shortName>
    </recommendedName>
</protein>